<reference key="1">
    <citation type="journal article" date="2008" name="Foodborne Pathog. Dis.">
        <title>The complete genome sequence and analysis of the human pathogen Campylobacter lari.</title>
        <authorList>
            <person name="Miller W.G."/>
            <person name="Wang G."/>
            <person name="Binnewies T.T."/>
            <person name="Parker C.T."/>
        </authorList>
    </citation>
    <scope>NUCLEOTIDE SEQUENCE [LARGE SCALE GENOMIC DNA]</scope>
    <source>
        <strain>RM2100 / D67 / ATCC BAA-1060</strain>
    </source>
</reference>
<protein>
    <recommendedName>
        <fullName evidence="1">Arginine--tRNA ligase</fullName>
        <ecNumber evidence="1">6.1.1.19</ecNumber>
    </recommendedName>
    <alternativeName>
        <fullName evidence="1">Arginyl-tRNA synthetase</fullName>
        <shortName evidence="1">ArgRS</shortName>
    </alternativeName>
</protein>
<comment type="catalytic activity">
    <reaction evidence="1">
        <text>tRNA(Arg) + L-arginine + ATP = L-arginyl-tRNA(Arg) + AMP + diphosphate</text>
        <dbReference type="Rhea" id="RHEA:20301"/>
        <dbReference type="Rhea" id="RHEA-COMP:9658"/>
        <dbReference type="Rhea" id="RHEA-COMP:9673"/>
        <dbReference type="ChEBI" id="CHEBI:30616"/>
        <dbReference type="ChEBI" id="CHEBI:32682"/>
        <dbReference type="ChEBI" id="CHEBI:33019"/>
        <dbReference type="ChEBI" id="CHEBI:78442"/>
        <dbReference type="ChEBI" id="CHEBI:78513"/>
        <dbReference type="ChEBI" id="CHEBI:456215"/>
        <dbReference type="EC" id="6.1.1.19"/>
    </reaction>
</comment>
<comment type="subunit">
    <text evidence="1">Monomer.</text>
</comment>
<comment type="subcellular location">
    <subcellularLocation>
        <location evidence="1">Cytoplasm</location>
    </subcellularLocation>
</comment>
<comment type="similarity">
    <text evidence="1">Belongs to the class-I aminoacyl-tRNA synthetase family.</text>
</comment>
<gene>
    <name evidence="1" type="primary">argS</name>
    <name type="ordered locus">Cla_1087</name>
</gene>
<name>SYR_CAMLR</name>
<keyword id="KW-0030">Aminoacyl-tRNA synthetase</keyword>
<keyword id="KW-0067">ATP-binding</keyword>
<keyword id="KW-0963">Cytoplasm</keyword>
<keyword id="KW-0436">Ligase</keyword>
<keyword id="KW-0547">Nucleotide-binding</keyword>
<keyword id="KW-0648">Protein biosynthesis</keyword>
<keyword id="KW-1185">Reference proteome</keyword>
<evidence type="ECO:0000255" key="1">
    <source>
        <dbReference type="HAMAP-Rule" id="MF_00123"/>
    </source>
</evidence>
<sequence>MKTLVYKEIKEKLGRDFILENPKNKNLAHFATPLAFSLAKELKQNPMIIANDIVVKLKDCDCFESVEALNGYVNFKLSKAFLNSLATQALSDSENFAKDDKKEQSFLLEYVSANPTGPLHIGHARGAIFGDTLTRVARHLGYKFDTEYYVNDAGNQIYLLGLSILLAVKEHCLKEQVQYPDEYYKGEYIIDVAKEAFAEFEKDFFVEENIPQLALWAKDKMLKIIKQNLADAKIFIDAYVSETSYYSELENTLKALKEHGGTYEQDGKIWLASSVKGDEKDRVIIKDDGKGTYLAADIVYHKDKMSRGYDKCINIWGADHHGYIARMKAAMEFLGHDSQNLEIILAQMVSLLKNGEPYKMSKRAGNFILMGDVLEELGSDVLRYIFISKKCDTHLEFDVDEFKKEDSSNPVYYINYAHARIHQVFAKAGKSVDDVMYAKFESLNEDGMNLLFESLNLKAVLNDAFESRSLQKIPDYLKNLASLFHKFYNENKVVGSDNEDEFLKLFAICALSIKIAFALMGIEAKNKMNHD</sequence>
<accession>B9KCX0</accession>
<organism>
    <name type="scientific">Campylobacter lari (strain RM2100 / D67 / ATCC BAA-1060)</name>
    <dbReference type="NCBI Taxonomy" id="306263"/>
    <lineage>
        <taxon>Bacteria</taxon>
        <taxon>Pseudomonadati</taxon>
        <taxon>Campylobacterota</taxon>
        <taxon>Epsilonproteobacteria</taxon>
        <taxon>Campylobacterales</taxon>
        <taxon>Campylobacteraceae</taxon>
        <taxon>Campylobacter</taxon>
    </lineage>
</organism>
<feature type="chain" id="PRO_1000198881" description="Arginine--tRNA ligase">
    <location>
        <begin position="1"/>
        <end position="531"/>
    </location>
</feature>
<feature type="short sequence motif" description="'HIGH' region">
    <location>
        <begin position="113"/>
        <end position="123"/>
    </location>
</feature>
<proteinExistence type="inferred from homology"/>
<dbReference type="EC" id="6.1.1.19" evidence="1"/>
<dbReference type="EMBL" id="CP000932">
    <property type="protein sequence ID" value="ACM64409.1"/>
    <property type="molecule type" value="Genomic_DNA"/>
</dbReference>
<dbReference type="RefSeq" id="WP_012661792.1">
    <property type="nucleotide sequence ID" value="NC_012039.1"/>
</dbReference>
<dbReference type="SMR" id="B9KCX0"/>
<dbReference type="STRING" id="306263.Cla_1087"/>
<dbReference type="KEGG" id="cla:CLA_1087"/>
<dbReference type="PATRIC" id="fig|306263.5.peg.1072"/>
<dbReference type="eggNOG" id="COG0018">
    <property type="taxonomic scope" value="Bacteria"/>
</dbReference>
<dbReference type="HOGENOM" id="CLU_006406_0_1_7"/>
<dbReference type="Proteomes" id="UP000007727">
    <property type="component" value="Chromosome"/>
</dbReference>
<dbReference type="GO" id="GO:0005737">
    <property type="term" value="C:cytoplasm"/>
    <property type="evidence" value="ECO:0007669"/>
    <property type="project" value="UniProtKB-SubCell"/>
</dbReference>
<dbReference type="GO" id="GO:0004814">
    <property type="term" value="F:arginine-tRNA ligase activity"/>
    <property type="evidence" value="ECO:0007669"/>
    <property type="project" value="UniProtKB-UniRule"/>
</dbReference>
<dbReference type="GO" id="GO:0005524">
    <property type="term" value="F:ATP binding"/>
    <property type="evidence" value="ECO:0007669"/>
    <property type="project" value="UniProtKB-UniRule"/>
</dbReference>
<dbReference type="GO" id="GO:0006420">
    <property type="term" value="P:arginyl-tRNA aminoacylation"/>
    <property type="evidence" value="ECO:0007669"/>
    <property type="project" value="UniProtKB-UniRule"/>
</dbReference>
<dbReference type="CDD" id="cd00671">
    <property type="entry name" value="ArgRS_core"/>
    <property type="match status" value="1"/>
</dbReference>
<dbReference type="FunFam" id="3.40.50.620:FF:000062">
    <property type="entry name" value="Arginine--tRNA ligase"/>
    <property type="match status" value="1"/>
</dbReference>
<dbReference type="Gene3D" id="3.30.1360.70">
    <property type="entry name" value="Arginyl tRNA synthetase N-terminal domain"/>
    <property type="match status" value="1"/>
</dbReference>
<dbReference type="Gene3D" id="3.40.50.620">
    <property type="entry name" value="HUPs"/>
    <property type="match status" value="1"/>
</dbReference>
<dbReference type="Gene3D" id="1.10.730.10">
    <property type="entry name" value="Isoleucyl-tRNA Synthetase, Domain 1"/>
    <property type="match status" value="1"/>
</dbReference>
<dbReference type="HAMAP" id="MF_00123">
    <property type="entry name" value="Arg_tRNA_synth"/>
    <property type="match status" value="1"/>
</dbReference>
<dbReference type="InterPro" id="IPR001412">
    <property type="entry name" value="aa-tRNA-synth_I_CS"/>
</dbReference>
<dbReference type="InterPro" id="IPR001278">
    <property type="entry name" value="Arg-tRNA-ligase"/>
</dbReference>
<dbReference type="InterPro" id="IPR005148">
    <property type="entry name" value="Arg-tRNA-synth_N"/>
</dbReference>
<dbReference type="InterPro" id="IPR036695">
    <property type="entry name" value="Arg-tRNA-synth_N_sf"/>
</dbReference>
<dbReference type="InterPro" id="IPR035684">
    <property type="entry name" value="ArgRS_core"/>
</dbReference>
<dbReference type="InterPro" id="IPR008909">
    <property type="entry name" value="DALR_anticod-bd"/>
</dbReference>
<dbReference type="InterPro" id="IPR014729">
    <property type="entry name" value="Rossmann-like_a/b/a_fold"/>
</dbReference>
<dbReference type="InterPro" id="IPR009080">
    <property type="entry name" value="tRNAsynth_Ia_anticodon-bd"/>
</dbReference>
<dbReference type="NCBIfam" id="TIGR00456">
    <property type="entry name" value="argS"/>
    <property type="match status" value="1"/>
</dbReference>
<dbReference type="PANTHER" id="PTHR11956:SF5">
    <property type="entry name" value="ARGININE--TRNA LIGASE, CYTOPLASMIC"/>
    <property type="match status" value="1"/>
</dbReference>
<dbReference type="PANTHER" id="PTHR11956">
    <property type="entry name" value="ARGINYL-TRNA SYNTHETASE"/>
    <property type="match status" value="1"/>
</dbReference>
<dbReference type="Pfam" id="PF03485">
    <property type="entry name" value="Arg_tRNA_synt_N"/>
    <property type="match status" value="1"/>
</dbReference>
<dbReference type="Pfam" id="PF05746">
    <property type="entry name" value="DALR_1"/>
    <property type="match status" value="1"/>
</dbReference>
<dbReference type="Pfam" id="PF00750">
    <property type="entry name" value="tRNA-synt_1d"/>
    <property type="match status" value="1"/>
</dbReference>
<dbReference type="PRINTS" id="PR01038">
    <property type="entry name" value="TRNASYNTHARG"/>
</dbReference>
<dbReference type="SMART" id="SM01016">
    <property type="entry name" value="Arg_tRNA_synt_N"/>
    <property type="match status" value="1"/>
</dbReference>
<dbReference type="SMART" id="SM00836">
    <property type="entry name" value="DALR_1"/>
    <property type="match status" value="1"/>
</dbReference>
<dbReference type="SUPFAM" id="SSF47323">
    <property type="entry name" value="Anticodon-binding domain of a subclass of class I aminoacyl-tRNA synthetases"/>
    <property type="match status" value="1"/>
</dbReference>
<dbReference type="SUPFAM" id="SSF55190">
    <property type="entry name" value="Arginyl-tRNA synthetase (ArgRS), N-terminal 'additional' domain"/>
    <property type="match status" value="1"/>
</dbReference>
<dbReference type="SUPFAM" id="SSF52374">
    <property type="entry name" value="Nucleotidylyl transferase"/>
    <property type="match status" value="1"/>
</dbReference>
<dbReference type="PROSITE" id="PS00178">
    <property type="entry name" value="AA_TRNA_LIGASE_I"/>
    <property type="match status" value="1"/>
</dbReference>